<keyword id="KW-0378">Hydrolase</keyword>
<keyword id="KW-0479">Metal-binding</keyword>
<keyword id="KW-0482">Metalloprotease</keyword>
<keyword id="KW-0645">Protease</keyword>
<keyword id="KW-0862">Zinc</keyword>
<sequence length="228" mass="25698">MDNNFKIKDLPKNERPQERLIRYGAEVLSNSELLAVILRTGTKNQNIMMLASSLIKETGGLDQLFNQSIEELTKIKGIGVTKAVQILALSELSKRFKTYKSGNEYKINTPLDVSNLVMEDMKYLKQEKLKILILNTKNIVTYIRDVFIGTLNSSIVHPREIFCEAIKKNGASIIICHNHPSGDPTPSKEDINITLRLKECGKLIGIDLLDHIIIGENKYVSMKEKGTI</sequence>
<feature type="chain" id="PRO_1000089806" description="UPF0758 protein CLD_1541">
    <location>
        <begin position="1"/>
        <end position="228"/>
    </location>
</feature>
<feature type="domain" description="MPN" evidence="1">
    <location>
        <begin position="106"/>
        <end position="228"/>
    </location>
</feature>
<feature type="short sequence motif" description="JAMM motif" evidence="1">
    <location>
        <begin position="177"/>
        <end position="190"/>
    </location>
</feature>
<feature type="binding site" evidence="1">
    <location>
        <position position="177"/>
    </location>
    <ligand>
        <name>Zn(2+)</name>
        <dbReference type="ChEBI" id="CHEBI:29105"/>
        <note>catalytic</note>
    </ligand>
</feature>
<feature type="binding site" evidence="1">
    <location>
        <position position="179"/>
    </location>
    <ligand>
        <name>Zn(2+)</name>
        <dbReference type="ChEBI" id="CHEBI:29105"/>
        <note>catalytic</note>
    </ligand>
</feature>
<feature type="binding site" evidence="1">
    <location>
        <position position="190"/>
    </location>
    <ligand>
        <name>Zn(2+)</name>
        <dbReference type="ChEBI" id="CHEBI:29105"/>
        <note>catalytic</note>
    </ligand>
</feature>
<dbReference type="EMBL" id="CP000939">
    <property type="protein sequence ID" value="ACA44655.1"/>
    <property type="molecule type" value="Genomic_DNA"/>
</dbReference>
<dbReference type="SMR" id="B1IM02"/>
<dbReference type="KEGG" id="cbb:CLD_1541"/>
<dbReference type="HOGENOM" id="CLU_073529_0_2_9"/>
<dbReference type="Proteomes" id="UP000008541">
    <property type="component" value="Chromosome"/>
</dbReference>
<dbReference type="GO" id="GO:0046872">
    <property type="term" value="F:metal ion binding"/>
    <property type="evidence" value="ECO:0007669"/>
    <property type="project" value="UniProtKB-KW"/>
</dbReference>
<dbReference type="GO" id="GO:0008237">
    <property type="term" value="F:metallopeptidase activity"/>
    <property type="evidence" value="ECO:0007669"/>
    <property type="project" value="UniProtKB-KW"/>
</dbReference>
<dbReference type="GO" id="GO:0006508">
    <property type="term" value="P:proteolysis"/>
    <property type="evidence" value="ECO:0007669"/>
    <property type="project" value="UniProtKB-KW"/>
</dbReference>
<dbReference type="CDD" id="cd08071">
    <property type="entry name" value="MPN_DUF2466"/>
    <property type="match status" value="1"/>
</dbReference>
<dbReference type="Gene3D" id="1.10.150.20">
    <property type="entry name" value="5' to 3' exonuclease, C-terminal subdomain"/>
    <property type="match status" value="1"/>
</dbReference>
<dbReference type="Gene3D" id="3.40.140.10">
    <property type="entry name" value="Cytidine Deaminase, domain 2"/>
    <property type="match status" value="1"/>
</dbReference>
<dbReference type="InterPro" id="IPR037518">
    <property type="entry name" value="MPN"/>
</dbReference>
<dbReference type="InterPro" id="IPR025657">
    <property type="entry name" value="RadC_JAB"/>
</dbReference>
<dbReference type="InterPro" id="IPR010994">
    <property type="entry name" value="RuvA_2-like"/>
</dbReference>
<dbReference type="InterPro" id="IPR001405">
    <property type="entry name" value="UPF0758"/>
</dbReference>
<dbReference type="InterPro" id="IPR020891">
    <property type="entry name" value="UPF0758_CS"/>
</dbReference>
<dbReference type="InterPro" id="IPR046778">
    <property type="entry name" value="UPF0758_N"/>
</dbReference>
<dbReference type="NCBIfam" id="NF000642">
    <property type="entry name" value="PRK00024.1"/>
    <property type="match status" value="1"/>
</dbReference>
<dbReference type="NCBIfam" id="TIGR00608">
    <property type="entry name" value="radc"/>
    <property type="match status" value="1"/>
</dbReference>
<dbReference type="PANTHER" id="PTHR30471">
    <property type="entry name" value="DNA REPAIR PROTEIN RADC"/>
    <property type="match status" value="1"/>
</dbReference>
<dbReference type="PANTHER" id="PTHR30471:SF3">
    <property type="entry name" value="UPF0758 PROTEIN YEES-RELATED"/>
    <property type="match status" value="1"/>
</dbReference>
<dbReference type="Pfam" id="PF04002">
    <property type="entry name" value="RadC"/>
    <property type="match status" value="1"/>
</dbReference>
<dbReference type="Pfam" id="PF20582">
    <property type="entry name" value="UPF0758_N"/>
    <property type="match status" value="1"/>
</dbReference>
<dbReference type="SUPFAM" id="SSF102712">
    <property type="entry name" value="JAB1/MPN domain"/>
    <property type="match status" value="1"/>
</dbReference>
<dbReference type="SUPFAM" id="SSF47781">
    <property type="entry name" value="RuvA domain 2-like"/>
    <property type="match status" value="1"/>
</dbReference>
<dbReference type="PROSITE" id="PS50249">
    <property type="entry name" value="MPN"/>
    <property type="match status" value="1"/>
</dbReference>
<dbReference type="PROSITE" id="PS01302">
    <property type="entry name" value="UPF0758"/>
    <property type="match status" value="1"/>
</dbReference>
<accession>B1IM02</accession>
<name>Y1541_CLOBK</name>
<proteinExistence type="inferred from homology"/>
<protein>
    <recommendedName>
        <fullName>UPF0758 protein CLD_1541</fullName>
    </recommendedName>
</protein>
<comment type="similarity">
    <text evidence="2">Belongs to the UPF0758 family.</text>
</comment>
<reference key="1">
    <citation type="journal article" date="2007" name="PLoS ONE">
        <title>Analysis of the neurotoxin complex genes in Clostridium botulinum A1-A4 and B1 strains: BoNT/A3, /Ba4 and /B1 clusters are located within plasmids.</title>
        <authorList>
            <person name="Smith T.J."/>
            <person name="Hill K.K."/>
            <person name="Foley B.T."/>
            <person name="Detter J.C."/>
            <person name="Munk A.C."/>
            <person name="Bruce D.C."/>
            <person name="Doggett N.A."/>
            <person name="Smith L.A."/>
            <person name="Marks J.D."/>
            <person name="Xie G."/>
            <person name="Brettin T.S."/>
        </authorList>
    </citation>
    <scope>NUCLEOTIDE SEQUENCE [LARGE SCALE GENOMIC DNA]</scope>
    <source>
        <strain>Okra / Type B1</strain>
    </source>
</reference>
<organism>
    <name type="scientific">Clostridium botulinum (strain Okra / Type B1)</name>
    <dbReference type="NCBI Taxonomy" id="498213"/>
    <lineage>
        <taxon>Bacteria</taxon>
        <taxon>Bacillati</taxon>
        <taxon>Bacillota</taxon>
        <taxon>Clostridia</taxon>
        <taxon>Eubacteriales</taxon>
        <taxon>Clostridiaceae</taxon>
        <taxon>Clostridium</taxon>
    </lineage>
</organism>
<gene>
    <name type="ordered locus">CLD_1541</name>
</gene>
<evidence type="ECO:0000255" key="1">
    <source>
        <dbReference type="PROSITE-ProRule" id="PRU01182"/>
    </source>
</evidence>
<evidence type="ECO:0000305" key="2"/>